<name>WHIA_LIMF3</name>
<accession>B2GAL2</accession>
<evidence type="ECO:0000255" key="1">
    <source>
        <dbReference type="HAMAP-Rule" id="MF_01420"/>
    </source>
</evidence>
<proteinExistence type="inferred from homology"/>
<comment type="function">
    <text evidence="1">Involved in cell division and chromosome segregation.</text>
</comment>
<comment type="similarity">
    <text evidence="1">Belongs to the WhiA family.</text>
</comment>
<feature type="chain" id="PRO_0000376499" description="Probable cell division protein WhiA">
    <location>
        <begin position="1"/>
        <end position="312"/>
    </location>
</feature>
<feature type="DNA-binding region" description="H-T-H motif" evidence="1">
    <location>
        <begin position="274"/>
        <end position="308"/>
    </location>
</feature>
<gene>
    <name evidence="1" type="primary">whiA</name>
    <name type="ordered locus">LAF_0358</name>
</gene>
<keyword id="KW-0131">Cell cycle</keyword>
<keyword id="KW-0132">Cell division</keyword>
<keyword id="KW-0238">DNA-binding</keyword>
<keyword id="KW-1185">Reference proteome</keyword>
<organism>
    <name type="scientific">Limosilactobacillus fermentum (strain NBRC 3956 / LMG 18251)</name>
    <name type="common">Lactobacillus fermentum</name>
    <dbReference type="NCBI Taxonomy" id="334390"/>
    <lineage>
        <taxon>Bacteria</taxon>
        <taxon>Bacillati</taxon>
        <taxon>Bacillota</taxon>
        <taxon>Bacilli</taxon>
        <taxon>Lactobacillales</taxon>
        <taxon>Lactobacillaceae</taxon>
        <taxon>Limosilactobacillus</taxon>
    </lineage>
</organism>
<reference key="1">
    <citation type="journal article" date="2008" name="DNA Res.">
        <title>Comparative genome analysis of Lactobacillus reuteri and Lactobacillus fermentum reveal a genomic island for reuterin and cobalamin production.</title>
        <authorList>
            <person name="Morita H."/>
            <person name="Toh H."/>
            <person name="Fukuda S."/>
            <person name="Horikawa H."/>
            <person name="Oshima K."/>
            <person name="Suzuki T."/>
            <person name="Murakami M."/>
            <person name="Hisamatsu S."/>
            <person name="Kato Y."/>
            <person name="Takizawa T."/>
            <person name="Fukuoka H."/>
            <person name="Yoshimura T."/>
            <person name="Itoh K."/>
            <person name="O'Sullivan D.J."/>
            <person name="McKay L.L."/>
            <person name="Ohno H."/>
            <person name="Kikuchi J."/>
            <person name="Masaoka T."/>
            <person name="Hattori M."/>
        </authorList>
    </citation>
    <scope>NUCLEOTIDE SEQUENCE [LARGE SCALE GENOMIC DNA]</scope>
    <source>
        <strain>NBRC 3956 / LMG 18251</strain>
    </source>
</reference>
<dbReference type="EMBL" id="AP008937">
    <property type="protein sequence ID" value="BAG26694.1"/>
    <property type="molecule type" value="Genomic_DNA"/>
</dbReference>
<dbReference type="RefSeq" id="WP_003682621.1">
    <property type="nucleotide sequence ID" value="NC_010610.1"/>
</dbReference>
<dbReference type="SMR" id="B2GAL2"/>
<dbReference type="GeneID" id="83715315"/>
<dbReference type="KEGG" id="lfe:LAF_0358"/>
<dbReference type="eggNOG" id="COG1481">
    <property type="taxonomic scope" value="Bacteria"/>
</dbReference>
<dbReference type="HOGENOM" id="CLU_053282_0_0_9"/>
<dbReference type="Proteomes" id="UP000001697">
    <property type="component" value="Chromosome"/>
</dbReference>
<dbReference type="GO" id="GO:0003677">
    <property type="term" value="F:DNA binding"/>
    <property type="evidence" value="ECO:0007669"/>
    <property type="project" value="UniProtKB-UniRule"/>
</dbReference>
<dbReference type="GO" id="GO:0051301">
    <property type="term" value="P:cell division"/>
    <property type="evidence" value="ECO:0007669"/>
    <property type="project" value="UniProtKB-UniRule"/>
</dbReference>
<dbReference type="GO" id="GO:0043937">
    <property type="term" value="P:regulation of sporulation"/>
    <property type="evidence" value="ECO:0007669"/>
    <property type="project" value="InterPro"/>
</dbReference>
<dbReference type="Gene3D" id="3.10.28.10">
    <property type="entry name" value="Homing endonucleases"/>
    <property type="match status" value="1"/>
</dbReference>
<dbReference type="HAMAP" id="MF_01420">
    <property type="entry name" value="HTH_type_WhiA"/>
    <property type="match status" value="1"/>
</dbReference>
<dbReference type="InterPro" id="IPR027434">
    <property type="entry name" value="Homing_endonucl"/>
</dbReference>
<dbReference type="InterPro" id="IPR018478">
    <property type="entry name" value="Sporu_reg_WhiA_N_dom"/>
</dbReference>
<dbReference type="InterPro" id="IPR003802">
    <property type="entry name" value="Sporulation_regulator_WhiA"/>
</dbReference>
<dbReference type="InterPro" id="IPR023054">
    <property type="entry name" value="Sporulation_regulator_WhiA_C"/>
</dbReference>
<dbReference type="InterPro" id="IPR039518">
    <property type="entry name" value="WhiA_LAGLIDADG_dom"/>
</dbReference>
<dbReference type="NCBIfam" id="TIGR00647">
    <property type="entry name" value="DNA_bind_WhiA"/>
    <property type="match status" value="1"/>
</dbReference>
<dbReference type="PANTHER" id="PTHR37307">
    <property type="entry name" value="CELL DIVISION PROTEIN WHIA-RELATED"/>
    <property type="match status" value="1"/>
</dbReference>
<dbReference type="PANTHER" id="PTHR37307:SF1">
    <property type="entry name" value="CELL DIVISION PROTEIN WHIA-RELATED"/>
    <property type="match status" value="1"/>
</dbReference>
<dbReference type="Pfam" id="PF02650">
    <property type="entry name" value="HTH_WhiA"/>
    <property type="match status" value="1"/>
</dbReference>
<dbReference type="Pfam" id="PF14527">
    <property type="entry name" value="LAGLIDADG_WhiA"/>
    <property type="match status" value="1"/>
</dbReference>
<dbReference type="Pfam" id="PF10298">
    <property type="entry name" value="WhiA_N"/>
    <property type="match status" value="1"/>
</dbReference>
<dbReference type="SUPFAM" id="SSF55608">
    <property type="entry name" value="Homing endonucleases"/>
    <property type="match status" value="1"/>
</dbReference>
<sequence>MSYASEVKKELTGITVHEKNARAELMALIRMNGSIGLANHAMILNVQTESPAIARRIYSLIKQLYKVESDILVRKKMKLKKNNTYVVRLRHHVQEILGDLAILDGFQIKERVPLDLLTDDLMIRSYLRGAFLAGGSVNNPETSRYHLEIYSLYEEHNEMIAEMINRYDLNARTTNRRSGYIVYLKEAEKIANFLQLIGATTSMLEFENIRIVRDMRNSVNRLVNCENANMDKVANAANRQVENIMLIEATVGLSSLPEKLRAIAETRLAHQEVSLKELGTLVPGGPISKSGVNHRLRKLNAYADELRQGKAI</sequence>
<protein>
    <recommendedName>
        <fullName evidence="1">Probable cell division protein WhiA</fullName>
    </recommendedName>
</protein>